<protein>
    <recommendedName>
        <fullName evidence="1">Ribonuclease PH</fullName>
        <shortName evidence="1">RNase PH</shortName>
        <ecNumber evidence="1">2.7.7.56</ecNumber>
    </recommendedName>
    <alternativeName>
        <fullName evidence="1">tRNA nucleotidyltransferase</fullName>
    </alternativeName>
</protein>
<evidence type="ECO:0000255" key="1">
    <source>
        <dbReference type="HAMAP-Rule" id="MF_00564"/>
    </source>
</evidence>
<comment type="function">
    <text evidence="1">Phosphorolytic 3'-5' exoribonuclease that plays an important role in tRNA 3'-end maturation. Removes nucleotide residues following the 3'-CCA terminus of tRNAs; can also add nucleotides to the ends of RNA molecules by using nucleoside diphosphates as substrates, but this may not be physiologically important. Probably plays a role in initiation of 16S rRNA degradation (leading to ribosome degradation) during starvation.</text>
</comment>
<comment type="catalytic activity">
    <reaction evidence="1">
        <text>tRNA(n+1) + phosphate = tRNA(n) + a ribonucleoside 5'-diphosphate</text>
        <dbReference type="Rhea" id="RHEA:10628"/>
        <dbReference type="Rhea" id="RHEA-COMP:17343"/>
        <dbReference type="Rhea" id="RHEA-COMP:17344"/>
        <dbReference type="ChEBI" id="CHEBI:43474"/>
        <dbReference type="ChEBI" id="CHEBI:57930"/>
        <dbReference type="ChEBI" id="CHEBI:173114"/>
        <dbReference type="EC" id="2.7.7.56"/>
    </reaction>
</comment>
<comment type="subunit">
    <text evidence="1">Homohexameric ring arranged as a trimer of dimers.</text>
</comment>
<comment type="similarity">
    <text evidence="1">Belongs to the RNase PH family.</text>
</comment>
<accession>Q3Z6Z8</accession>
<dbReference type="EC" id="2.7.7.56" evidence="1"/>
<dbReference type="EMBL" id="CP000027">
    <property type="protein sequence ID" value="AAW39419.1"/>
    <property type="molecule type" value="Genomic_DNA"/>
</dbReference>
<dbReference type="RefSeq" id="WP_010936978.1">
    <property type="nucleotide sequence ID" value="NC_002936.3"/>
</dbReference>
<dbReference type="SMR" id="Q3Z6Z8"/>
<dbReference type="FunCoup" id="Q3Z6Z8">
    <property type="interactions" value="251"/>
</dbReference>
<dbReference type="STRING" id="243164.DET1289"/>
<dbReference type="GeneID" id="3229379"/>
<dbReference type="KEGG" id="det:DET1289"/>
<dbReference type="PATRIC" id="fig|243164.10.peg.1220"/>
<dbReference type="eggNOG" id="COG0689">
    <property type="taxonomic scope" value="Bacteria"/>
</dbReference>
<dbReference type="HOGENOM" id="CLU_050858_0_0_0"/>
<dbReference type="InParanoid" id="Q3Z6Z8"/>
<dbReference type="Proteomes" id="UP000008289">
    <property type="component" value="Chromosome"/>
</dbReference>
<dbReference type="GO" id="GO:0000175">
    <property type="term" value="F:3'-5'-RNA exonuclease activity"/>
    <property type="evidence" value="ECO:0007669"/>
    <property type="project" value="UniProtKB-UniRule"/>
</dbReference>
<dbReference type="GO" id="GO:0000049">
    <property type="term" value="F:tRNA binding"/>
    <property type="evidence" value="ECO:0007669"/>
    <property type="project" value="UniProtKB-UniRule"/>
</dbReference>
<dbReference type="GO" id="GO:0009022">
    <property type="term" value="F:tRNA nucleotidyltransferase activity"/>
    <property type="evidence" value="ECO:0007669"/>
    <property type="project" value="UniProtKB-UniRule"/>
</dbReference>
<dbReference type="GO" id="GO:0016075">
    <property type="term" value="P:rRNA catabolic process"/>
    <property type="evidence" value="ECO:0007669"/>
    <property type="project" value="UniProtKB-UniRule"/>
</dbReference>
<dbReference type="GO" id="GO:0006364">
    <property type="term" value="P:rRNA processing"/>
    <property type="evidence" value="ECO:0007669"/>
    <property type="project" value="UniProtKB-KW"/>
</dbReference>
<dbReference type="GO" id="GO:0008033">
    <property type="term" value="P:tRNA processing"/>
    <property type="evidence" value="ECO:0007669"/>
    <property type="project" value="UniProtKB-UniRule"/>
</dbReference>
<dbReference type="CDD" id="cd11362">
    <property type="entry name" value="RNase_PH_bact"/>
    <property type="match status" value="1"/>
</dbReference>
<dbReference type="FunFam" id="3.30.230.70:FF:000003">
    <property type="entry name" value="Ribonuclease PH"/>
    <property type="match status" value="1"/>
</dbReference>
<dbReference type="Gene3D" id="3.30.230.70">
    <property type="entry name" value="GHMP Kinase, N-terminal domain"/>
    <property type="match status" value="1"/>
</dbReference>
<dbReference type="HAMAP" id="MF_00564">
    <property type="entry name" value="RNase_PH"/>
    <property type="match status" value="1"/>
</dbReference>
<dbReference type="InterPro" id="IPR001247">
    <property type="entry name" value="ExoRNase_PH_dom1"/>
</dbReference>
<dbReference type="InterPro" id="IPR015847">
    <property type="entry name" value="ExoRNase_PH_dom2"/>
</dbReference>
<dbReference type="InterPro" id="IPR036345">
    <property type="entry name" value="ExoRNase_PH_dom2_sf"/>
</dbReference>
<dbReference type="InterPro" id="IPR027408">
    <property type="entry name" value="PNPase/RNase_PH_dom_sf"/>
</dbReference>
<dbReference type="InterPro" id="IPR020568">
    <property type="entry name" value="Ribosomal_Su5_D2-typ_SF"/>
</dbReference>
<dbReference type="InterPro" id="IPR050080">
    <property type="entry name" value="RNase_PH"/>
</dbReference>
<dbReference type="InterPro" id="IPR002381">
    <property type="entry name" value="RNase_PH_bac-type"/>
</dbReference>
<dbReference type="InterPro" id="IPR018336">
    <property type="entry name" value="RNase_PH_CS"/>
</dbReference>
<dbReference type="NCBIfam" id="TIGR01966">
    <property type="entry name" value="RNasePH"/>
    <property type="match status" value="1"/>
</dbReference>
<dbReference type="PANTHER" id="PTHR11953">
    <property type="entry name" value="EXOSOME COMPLEX COMPONENT"/>
    <property type="match status" value="1"/>
</dbReference>
<dbReference type="PANTHER" id="PTHR11953:SF0">
    <property type="entry name" value="EXOSOME COMPLEX COMPONENT RRP41"/>
    <property type="match status" value="1"/>
</dbReference>
<dbReference type="Pfam" id="PF01138">
    <property type="entry name" value="RNase_PH"/>
    <property type="match status" value="1"/>
</dbReference>
<dbReference type="Pfam" id="PF03725">
    <property type="entry name" value="RNase_PH_C"/>
    <property type="match status" value="1"/>
</dbReference>
<dbReference type="SUPFAM" id="SSF55666">
    <property type="entry name" value="Ribonuclease PH domain 2-like"/>
    <property type="match status" value="1"/>
</dbReference>
<dbReference type="SUPFAM" id="SSF54211">
    <property type="entry name" value="Ribosomal protein S5 domain 2-like"/>
    <property type="match status" value="1"/>
</dbReference>
<dbReference type="PROSITE" id="PS01277">
    <property type="entry name" value="RIBONUCLEASE_PH"/>
    <property type="match status" value="1"/>
</dbReference>
<reference key="1">
    <citation type="journal article" date="2005" name="Science">
        <title>Genome sequence of the PCE-dechlorinating bacterium Dehalococcoides ethenogenes.</title>
        <authorList>
            <person name="Seshadri R."/>
            <person name="Adrian L."/>
            <person name="Fouts D.E."/>
            <person name="Eisen J.A."/>
            <person name="Phillippy A.M."/>
            <person name="Methe B.A."/>
            <person name="Ward N.L."/>
            <person name="Nelson W.C."/>
            <person name="DeBoy R.T."/>
            <person name="Khouri H.M."/>
            <person name="Kolonay J.F."/>
            <person name="Dodson R.J."/>
            <person name="Daugherty S.C."/>
            <person name="Brinkac L.M."/>
            <person name="Sullivan S.A."/>
            <person name="Madupu R."/>
            <person name="Nelson K.E."/>
            <person name="Kang K.H."/>
            <person name="Impraim M."/>
            <person name="Tran K."/>
            <person name="Robinson J.M."/>
            <person name="Forberger H.A."/>
            <person name="Fraser C.M."/>
            <person name="Zinder S.H."/>
            <person name="Heidelberg J.F."/>
        </authorList>
    </citation>
    <scope>NUCLEOTIDE SEQUENCE [LARGE SCALE GENOMIC DNA]</scope>
    <source>
        <strain>ATCC BAA-2266 / KCTC 15142 / 195</strain>
    </source>
</reference>
<feature type="chain" id="PRO_1000061131" description="Ribonuclease PH">
    <location>
        <begin position="1"/>
        <end position="239"/>
    </location>
</feature>
<feature type="binding site" evidence="1">
    <location>
        <position position="87"/>
    </location>
    <ligand>
        <name>phosphate</name>
        <dbReference type="ChEBI" id="CHEBI:43474"/>
        <note>substrate</note>
    </ligand>
</feature>
<feature type="binding site" evidence="1">
    <location>
        <begin position="125"/>
        <end position="127"/>
    </location>
    <ligand>
        <name>phosphate</name>
        <dbReference type="ChEBI" id="CHEBI:43474"/>
        <note>substrate</note>
    </ligand>
</feature>
<proteinExistence type="inferred from homology"/>
<gene>
    <name evidence="1" type="primary">rph</name>
    <name type="ordered locus">DET1289</name>
</gene>
<keyword id="KW-0548">Nucleotidyltransferase</keyword>
<keyword id="KW-0694">RNA-binding</keyword>
<keyword id="KW-0698">rRNA processing</keyword>
<keyword id="KW-0808">Transferase</keyword>
<keyword id="KW-0819">tRNA processing</keyword>
<keyword id="KW-0820">tRNA-binding</keyword>
<sequence length="239" mass="26385">MQRGDGRNFNQLRPITITPGFQSFAEGSVLIEQGKTRVICSVSMEDKVPQFLRNSGTGWVTAEYSMLPRSTVTRTQRDSSAGKISGRSQEIQRLIGRSLRSCVDLAALGERSFIIDCDVIQADAGTRTASITGAYIALYLAFKKMVDMGILSKMPFTSQVAAVSVSIFKGNIVLDPCYDEDFQAEVDFNLVMNDRAEFVEIQGTAEGKTFSRDTLDQVLKLGEAGIWQLFDIQNSITRP</sequence>
<organism>
    <name type="scientific">Dehalococcoides mccartyi (strain ATCC BAA-2266 / KCTC 15142 / 195)</name>
    <name type="common">Dehalococcoides ethenogenes (strain 195)</name>
    <dbReference type="NCBI Taxonomy" id="243164"/>
    <lineage>
        <taxon>Bacteria</taxon>
        <taxon>Bacillati</taxon>
        <taxon>Chloroflexota</taxon>
        <taxon>Dehalococcoidia</taxon>
        <taxon>Dehalococcoidales</taxon>
        <taxon>Dehalococcoidaceae</taxon>
        <taxon>Dehalococcoides</taxon>
    </lineage>
</organism>
<name>RNPH_DEHM1</name>